<proteinExistence type="inferred from homology"/>
<keyword id="KW-0378">Hydrolase</keyword>
<keyword id="KW-0479">Metal-binding</keyword>
<keyword id="KW-1185">Reference proteome</keyword>
<keyword id="KW-0862">Zinc</keyword>
<feature type="chain" id="PRO_0000171676" description="Cytidine deaminase">
    <location>
        <begin position="1"/>
        <end position="132"/>
    </location>
</feature>
<feature type="domain" description="CMP/dCMP-type deaminase" evidence="2">
    <location>
        <begin position="1"/>
        <end position="128"/>
    </location>
</feature>
<feature type="active site" description="Proton donor" evidence="1">
    <location>
        <position position="55"/>
    </location>
</feature>
<feature type="binding site" evidence="1">
    <location>
        <begin position="42"/>
        <end position="44"/>
    </location>
    <ligand>
        <name>substrate</name>
    </ligand>
</feature>
<feature type="binding site" evidence="1">
    <location>
        <position position="53"/>
    </location>
    <ligand>
        <name>Zn(2+)</name>
        <dbReference type="ChEBI" id="CHEBI:29105"/>
        <note>catalytic</note>
    </ligand>
</feature>
<feature type="binding site" evidence="1">
    <location>
        <position position="86"/>
    </location>
    <ligand>
        <name>Zn(2+)</name>
        <dbReference type="ChEBI" id="CHEBI:29105"/>
        <note>catalytic</note>
    </ligand>
</feature>
<feature type="binding site" evidence="1">
    <location>
        <position position="89"/>
    </location>
    <ligand>
        <name>Zn(2+)</name>
        <dbReference type="ChEBI" id="CHEBI:29105"/>
        <note>catalytic</note>
    </ligand>
</feature>
<reference key="1">
    <citation type="journal article" date="2000" name="Nucleic Acids Res.">
        <title>Complete genome sequence of the alkaliphilic bacterium Bacillus halodurans and genomic sequence comparison with Bacillus subtilis.</title>
        <authorList>
            <person name="Takami H."/>
            <person name="Nakasone K."/>
            <person name="Takaki Y."/>
            <person name="Maeno G."/>
            <person name="Sasaki R."/>
            <person name="Masui N."/>
            <person name="Fuji F."/>
            <person name="Hirama C."/>
            <person name="Nakamura Y."/>
            <person name="Ogasawara N."/>
            <person name="Kuhara S."/>
            <person name="Horikoshi K."/>
        </authorList>
    </citation>
    <scope>NUCLEOTIDE SEQUENCE [LARGE SCALE GENOMIC DNA]</scope>
    <source>
        <strain>ATCC BAA-125 / DSM 18197 / FERM 7344 / JCM 9153 / C-125</strain>
    </source>
</reference>
<sequence length="132" mass="14301">MDRQMLIKEAIQAREGAYVPYSRFQVGAALLMKDGSVIRGANIENASYGLTNCAERTALFKAYSEGRRDVVAIAVVADTKRPVPPCGACRQVMAELCPADTKVYLGNLQGDIQEITVSELLPGAFTAEDMND</sequence>
<evidence type="ECO:0000250" key="1"/>
<evidence type="ECO:0000255" key="2">
    <source>
        <dbReference type="PROSITE-ProRule" id="PRU01083"/>
    </source>
</evidence>
<evidence type="ECO:0000305" key="3"/>
<accession>Q9KD53</accession>
<comment type="function">
    <text evidence="1">This enzyme scavenges exogenous and endogenous cytidine and 2'-deoxycytidine for UMP synthesis.</text>
</comment>
<comment type="catalytic activity">
    <reaction>
        <text>cytidine + H2O + H(+) = uridine + NH4(+)</text>
        <dbReference type="Rhea" id="RHEA:16069"/>
        <dbReference type="ChEBI" id="CHEBI:15377"/>
        <dbReference type="ChEBI" id="CHEBI:15378"/>
        <dbReference type="ChEBI" id="CHEBI:16704"/>
        <dbReference type="ChEBI" id="CHEBI:17562"/>
        <dbReference type="ChEBI" id="CHEBI:28938"/>
        <dbReference type="EC" id="3.5.4.5"/>
    </reaction>
</comment>
<comment type="catalytic activity">
    <reaction>
        <text>2'-deoxycytidine + H2O + H(+) = 2'-deoxyuridine + NH4(+)</text>
        <dbReference type="Rhea" id="RHEA:13433"/>
        <dbReference type="ChEBI" id="CHEBI:15377"/>
        <dbReference type="ChEBI" id="CHEBI:15378"/>
        <dbReference type="ChEBI" id="CHEBI:15698"/>
        <dbReference type="ChEBI" id="CHEBI:16450"/>
        <dbReference type="ChEBI" id="CHEBI:28938"/>
        <dbReference type="EC" id="3.5.4.5"/>
    </reaction>
</comment>
<comment type="cofactor">
    <cofactor evidence="1">
        <name>Zn(2+)</name>
        <dbReference type="ChEBI" id="CHEBI:29105"/>
    </cofactor>
</comment>
<comment type="similarity">
    <text evidence="3">Belongs to the cytidine and deoxycytidylate deaminase family.</text>
</comment>
<gene>
    <name type="primary">cdd</name>
    <name type="ordered locus">BH1366</name>
</gene>
<dbReference type="EC" id="3.5.4.5"/>
<dbReference type="EMBL" id="BA000004">
    <property type="protein sequence ID" value="BAB05085.1"/>
    <property type="molecule type" value="Genomic_DNA"/>
</dbReference>
<dbReference type="PIR" id="F83820">
    <property type="entry name" value="F83820"/>
</dbReference>
<dbReference type="RefSeq" id="WP_010897531.1">
    <property type="nucleotide sequence ID" value="NC_002570.2"/>
</dbReference>
<dbReference type="SMR" id="Q9KD53"/>
<dbReference type="STRING" id="272558.gene:10727260"/>
<dbReference type="GeneID" id="87596986"/>
<dbReference type="KEGG" id="bha:BH1366"/>
<dbReference type="eggNOG" id="COG0295">
    <property type="taxonomic scope" value="Bacteria"/>
</dbReference>
<dbReference type="HOGENOM" id="CLU_097262_0_1_9"/>
<dbReference type="OrthoDB" id="9795347at2"/>
<dbReference type="Proteomes" id="UP000001258">
    <property type="component" value="Chromosome"/>
</dbReference>
<dbReference type="GO" id="GO:0005829">
    <property type="term" value="C:cytosol"/>
    <property type="evidence" value="ECO:0007669"/>
    <property type="project" value="TreeGrafter"/>
</dbReference>
<dbReference type="GO" id="GO:0004126">
    <property type="term" value="F:cytidine deaminase activity"/>
    <property type="evidence" value="ECO:0007669"/>
    <property type="project" value="UniProtKB-EC"/>
</dbReference>
<dbReference type="GO" id="GO:0042802">
    <property type="term" value="F:identical protein binding"/>
    <property type="evidence" value="ECO:0007669"/>
    <property type="project" value="UniProtKB-ARBA"/>
</dbReference>
<dbReference type="GO" id="GO:0008270">
    <property type="term" value="F:zinc ion binding"/>
    <property type="evidence" value="ECO:0007669"/>
    <property type="project" value="InterPro"/>
</dbReference>
<dbReference type="GO" id="GO:0009972">
    <property type="term" value="P:cytidine deamination"/>
    <property type="evidence" value="ECO:0007669"/>
    <property type="project" value="InterPro"/>
</dbReference>
<dbReference type="CDD" id="cd01283">
    <property type="entry name" value="cytidine_deaminase"/>
    <property type="match status" value="1"/>
</dbReference>
<dbReference type="FunFam" id="3.40.140.10:FF:000008">
    <property type="entry name" value="Cytidine deaminase"/>
    <property type="match status" value="1"/>
</dbReference>
<dbReference type="Gene3D" id="3.40.140.10">
    <property type="entry name" value="Cytidine Deaminase, domain 2"/>
    <property type="match status" value="1"/>
</dbReference>
<dbReference type="InterPro" id="IPR016192">
    <property type="entry name" value="APOBEC/CMP_deaminase_Zn-bd"/>
</dbReference>
<dbReference type="InterPro" id="IPR002125">
    <property type="entry name" value="CMP_dCMP_dom"/>
</dbReference>
<dbReference type="InterPro" id="IPR050202">
    <property type="entry name" value="Cyt/Deoxycyt_deaminase"/>
</dbReference>
<dbReference type="InterPro" id="IPR006262">
    <property type="entry name" value="Cyt_deam_tetra"/>
</dbReference>
<dbReference type="InterPro" id="IPR016193">
    <property type="entry name" value="Cytidine_deaminase-like"/>
</dbReference>
<dbReference type="NCBIfam" id="TIGR01354">
    <property type="entry name" value="cyt_deam_tetra"/>
    <property type="match status" value="1"/>
</dbReference>
<dbReference type="NCBIfam" id="NF004064">
    <property type="entry name" value="PRK05578.1"/>
    <property type="match status" value="1"/>
</dbReference>
<dbReference type="NCBIfam" id="NF009076">
    <property type="entry name" value="PRK12411.1"/>
    <property type="match status" value="1"/>
</dbReference>
<dbReference type="PANTHER" id="PTHR11644">
    <property type="entry name" value="CYTIDINE DEAMINASE"/>
    <property type="match status" value="1"/>
</dbReference>
<dbReference type="PANTHER" id="PTHR11644:SF2">
    <property type="entry name" value="CYTIDINE DEAMINASE"/>
    <property type="match status" value="1"/>
</dbReference>
<dbReference type="Pfam" id="PF00383">
    <property type="entry name" value="dCMP_cyt_deam_1"/>
    <property type="match status" value="1"/>
</dbReference>
<dbReference type="SUPFAM" id="SSF53927">
    <property type="entry name" value="Cytidine deaminase-like"/>
    <property type="match status" value="1"/>
</dbReference>
<dbReference type="PROSITE" id="PS00903">
    <property type="entry name" value="CYT_DCMP_DEAMINASES_1"/>
    <property type="match status" value="1"/>
</dbReference>
<dbReference type="PROSITE" id="PS51747">
    <property type="entry name" value="CYT_DCMP_DEAMINASES_2"/>
    <property type="match status" value="1"/>
</dbReference>
<organism>
    <name type="scientific">Halalkalibacterium halodurans (strain ATCC BAA-125 / DSM 18197 / FERM 7344 / JCM 9153 / C-125)</name>
    <name type="common">Bacillus halodurans</name>
    <dbReference type="NCBI Taxonomy" id="272558"/>
    <lineage>
        <taxon>Bacteria</taxon>
        <taxon>Bacillati</taxon>
        <taxon>Bacillota</taxon>
        <taxon>Bacilli</taxon>
        <taxon>Bacillales</taxon>
        <taxon>Bacillaceae</taxon>
        <taxon>Halalkalibacterium (ex Joshi et al. 2022)</taxon>
    </lineage>
</organism>
<protein>
    <recommendedName>
        <fullName>Cytidine deaminase</fullName>
        <shortName>CDA</shortName>
        <ecNumber>3.5.4.5</ecNumber>
    </recommendedName>
    <alternativeName>
        <fullName>Cytidine aminohydrolase</fullName>
    </alternativeName>
</protein>
<name>CDD_HALH5</name>